<comment type="subcellular location">
    <subcellularLocation>
        <location>Membrane</location>
        <topology>Multi-pass membrane protein</topology>
    </subcellularLocation>
</comment>
<comment type="similarity">
    <text evidence="2">Belongs to the ThrE exporter (TC 2.A.79) family.</text>
</comment>
<comment type="caution">
    <text evidence="2">This is a truncated version of a ThrE family protein. Strain S288c has a frameshift in position 382, which disrupts the gene coding for this protein and produces two ORFs YJL107C and YJL108C. A contiguous sequence for a S.cerevisiae ThrE family protein can be found in strain YJM789 (AC A6ZQL9).</text>
</comment>
<reference key="1">
    <citation type="journal article" date="1995" name="Yeast">
        <title>A 37.5 kb region of yeast chromosome X includes the SME1, MEF2, GSH1 and CSD3 genes, a TCP-1-related gene, an open reading frame similar to the DAL80 gene, and a tRNA(Arg).</title>
        <authorList>
            <person name="Rasmussen S.W."/>
        </authorList>
    </citation>
    <scope>NUCLEOTIDE SEQUENCE [GENOMIC DNA]</scope>
    <source>
        <strain>ATCC 96604 / S288c / FY1679</strain>
    </source>
</reference>
<reference key="2">
    <citation type="journal article" date="1996" name="EMBO J.">
        <title>Complete nucleotide sequence of Saccharomyces cerevisiae chromosome X.</title>
        <authorList>
            <person name="Galibert F."/>
            <person name="Alexandraki D."/>
            <person name="Baur A."/>
            <person name="Boles E."/>
            <person name="Chalwatzis N."/>
            <person name="Chuat J.-C."/>
            <person name="Coster F."/>
            <person name="Cziepluch C."/>
            <person name="de Haan M."/>
            <person name="Domdey H."/>
            <person name="Durand P."/>
            <person name="Entian K.-D."/>
            <person name="Gatius M."/>
            <person name="Goffeau A."/>
            <person name="Grivell L.A."/>
            <person name="Hennemann A."/>
            <person name="Herbert C.J."/>
            <person name="Heumann K."/>
            <person name="Hilger F."/>
            <person name="Hollenberg C.P."/>
            <person name="Huang M.-E."/>
            <person name="Jacq C."/>
            <person name="Jauniaux J.-C."/>
            <person name="Katsoulou C."/>
            <person name="Kirchrath L."/>
            <person name="Kleine K."/>
            <person name="Kordes E."/>
            <person name="Koetter P."/>
            <person name="Liebl S."/>
            <person name="Louis E.J."/>
            <person name="Manus V."/>
            <person name="Mewes H.-W."/>
            <person name="Miosga T."/>
            <person name="Obermaier B."/>
            <person name="Perea J."/>
            <person name="Pohl T.M."/>
            <person name="Portetelle D."/>
            <person name="Pujol A."/>
            <person name="Purnelle B."/>
            <person name="Ramezani Rad M."/>
            <person name="Rasmussen S.W."/>
            <person name="Rose M."/>
            <person name="Rossau R."/>
            <person name="Schaaff-Gerstenschlaeger I."/>
            <person name="Smits P.H.M."/>
            <person name="Scarcez T."/>
            <person name="Soriano N."/>
            <person name="To Van D."/>
            <person name="Tzermia M."/>
            <person name="Van Broekhoven A."/>
            <person name="Vandenbol M."/>
            <person name="Wedler H."/>
            <person name="von Wettstein D."/>
            <person name="Wambutt R."/>
            <person name="Zagulski M."/>
            <person name="Zollner A."/>
            <person name="Karpfinger-Hartl L."/>
        </authorList>
    </citation>
    <scope>NUCLEOTIDE SEQUENCE [LARGE SCALE GENOMIC DNA]</scope>
    <source>
        <strain>ATCC 204508 / S288c</strain>
    </source>
</reference>
<reference key="3">
    <citation type="journal article" date="2014" name="G3 (Bethesda)">
        <title>The reference genome sequence of Saccharomyces cerevisiae: Then and now.</title>
        <authorList>
            <person name="Engel S.R."/>
            <person name="Dietrich F.S."/>
            <person name="Fisk D.G."/>
            <person name="Binkley G."/>
            <person name="Balakrishnan R."/>
            <person name="Costanzo M.C."/>
            <person name="Dwight S.S."/>
            <person name="Hitz B.C."/>
            <person name="Karra K."/>
            <person name="Nash R.S."/>
            <person name="Weng S."/>
            <person name="Wong E.D."/>
            <person name="Lloyd P."/>
            <person name="Skrzypek M.S."/>
            <person name="Miyasato S.R."/>
            <person name="Simison M."/>
            <person name="Cherry J.M."/>
        </authorList>
    </citation>
    <scope>GENOME REANNOTATION</scope>
    <source>
        <strain>ATCC 204508 / S288c</strain>
    </source>
</reference>
<reference key="4">
    <citation type="journal article" date="2007" name="Genome Res.">
        <title>Approaching a complete repository of sequence-verified protein-encoding clones for Saccharomyces cerevisiae.</title>
        <authorList>
            <person name="Hu Y."/>
            <person name="Rolfs A."/>
            <person name="Bhullar B."/>
            <person name="Murthy T.V.S."/>
            <person name="Zhu C."/>
            <person name="Berger M.F."/>
            <person name="Camargo A.A."/>
            <person name="Kelley F."/>
            <person name="McCarron S."/>
            <person name="Jepson D."/>
            <person name="Richardson A."/>
            <person name="Raphael J."/>
            <person name="Moreira D."/>
            <person name="Taycher E."/>
            <person name="Zuo D."/>
            <person name="Mohr S."/>
            <person name="Kane M.F."/>
            <person name="Williamson J."/>
            <person name="Simpson A.J.G."/>
            <person name="Bulyk M.L."/>
            <person name="Harlow E."/>
            <person name="Marsischky G."/>
            <person name="Kolodner R.D."/>
            <person name="LaBaer J."/>
        </authorList>
    </citation>
    <scope>NUCLEOTIDE SEQUENCE [GENOMIC DNA]</scope>
    <source>
        <strain>ATCC 204508 / S288c</strain>
    </source>
</reference>
<reference key="5">
    <citation type="journal article" date="2003" name="Genome Biol.">
        <title>Reinvestigation of the Saccharomyces cerevisiae genome annotation by comparison to the genome of a related fungus: Ashbya gossypii.</title>
        <authorList>
            <person name="Brachat S."/>
            <person name="Dietrich F.S."/>
            <person name="Voegeli S."/>
            <person name="Zhang Z."/>
            <person name="Stuart L."/>
            <person name="Lerch A."/>
            <person name="Gates K."/>
            <person name="Gaffney T.D."/>
            <person name="Philippsen P."/>
        </authorList>
    </citation>
    <scope>NUCLEOTIDE SEQUENCE [GENOMIC DNA] OF 1-25</scope>
    <scope>CONFIRMATION OF FRAMESHIFT</scope>
    <source>
        <strain>ATCC 204511 / S288c / AB972</strain>
    </source>
</reference>
<reference key="6">
    <citation type="journal article" date="2000" name="Yeast">
        <title>Organization of specific genomic regions of Zygosaccharomyces rouxii and Pichia sorbitophila: comparison with Saccharomyces cerevisiae.</title>
        <authorList>
            <person name="Sychrova H."/>
            <person name="Braun V."/>
            <person name="Potier S."/>
            <person name="Souciet J.L."/>
        </authorList>
    </citation>
    <scope>CONFIRMATION OF FRAMESHIFT</scope>
    <source>
        <strain>ATCC 204508 / S288c</strain>
        <strain>ATCC 28383 / FL100 / VTT C-80102</strain>
    </source>
</reference>
<reference key="7">
    <citation type="journal article" date="2006" name="Proc. Natl. Acad. Sci. U.S.A.">
        <title>A global topology map of the Saccharomyces cerevisiae membrane proteome.</title>
        <authorList>
            <person name="Kim H."/>
            <person name="Melen K."/>
            <person name="Oesterberg M."/>
            <person name="von Heijne G."/>
        </authorList>
    </citation>
    <scope>TOPOLOGY [LARGE SCALE ANALYSIS]</scope>
    <source>
        <strain>ATCC 208353 / W303-1A</strain>
    </source>
</reference>
<evidence type="ECO:0000255" key="1"/>
<evidence type="ECO:0000305" key="2"/>
<proteinExistence type="evidence at protein level"/>
<feature type="chain" id="PRO_0000203045" description="Pheromone-regulated membrane protein 10">
    <location>
        <begin position="1"/>
        <end position="383"/>
    </location>
</feature>
<feature type="topological domain" description="Cytoplasmic" evidence="1">
    <location>
        <begin position="1"/>
        <end position="65"/>
    </location>
</feature>
<feature type="transmembrane region" description="Helical" evidence="1">
    <location>
        <begin position="66"/>
        <end position="86"/>
    </location>
</feature>
<feature type="topological domain" description="Extracellular" evidence="1">
    <location>
        <position position="87"/>
    </location>
</feature>
<feature type="transmembrane region" description="Helical" evidence="1">
    <location>
        <begin position="88"/>
        <end position="108"/>
    </location>
</feature>
<feature type="topological domain" description="Cytoplasmic" evidence="1">
    <location>
        <begin position="109"/>
        <end position="117"/>
    </location>
</feature>
<feature type="transmembrane region" description="Helical" evidence="1">
    <location>
        <begin position="118"/>
        <end position="138"/>
    </location>
</feature>
<feature type="topological domain" description="Extracellular" evidence="1">
    <location>
        <begin position="139"/>
        <end position="141"/>
    </location>
</feature>
<feature type="transmembrane region" description="Helical" evidence="1">
    <location>
        <begin position="142"/>
        <end position="162"/>
    </location>
</feature>
<feature type="topological domain" description="Cytoplasmic" evidence="1">
    <location>
        <begin position="163"/>
        <end position="180"/>
    </location>
</feature>
<feature type="transmembrane region" description="Helical" evidence="1">
    <location>
        <begin position="181"/>
        <end position="201"/>
    </location>
</feature>
<feature type="topological domain" description="Extracellular" evidence="1">
    <location>
        <begin position="202"/>
        <end position="216"/>
    </location>
</feature>
<feature type="transmembrane region" description="Helical" evidence="1">
    <location>
        <begin position="217"/>
        <end position="237"/>
    </location>
</feature>
<feature type="topological domain" description="Cytoplasmic" evidence="1">
    <location>
        <begin position="238"/>
        <end position="241"/>
    </location>
</feature>
<feature type="transmembrane region" description="Helical" evidence="1">
    <location>
        <begin position="242"/>
        <end position="262"/>
    </location>
</feature>
<feature type="topological domain" description="Extracellular" evidence="1">
    <location>
        <begin position="263"/>
        <end position="271"/>
    </location>
</feature>
<feature type="transmembrane region" description="Helical" evidence="1">
    <location>
        <begin position="272"/>
        <end position="292"/>
    </location>
</feature>
<feature type="topological domain" description="Cytoplasmic" evidence="1">
    <location>
        <position position="293"/>
    </location>
</feature>
<feature type="transmembrane region" description="Helical" evidence="1">
    <location>
        <begin position="294"/>
        <end position="314"/>
    </location>
</feature>
<feature type="topological domain" description="Extracellular" evidence="1">
    <location>
        <begin position="315"/>
        <end position="352"/>
    </location>
</feature>
<feature type="transmembrane region" description="Helical" evidence="1">
    <location>
        <begin position="353"/>
        <end position="373"/>
    </location>
</feature>
<feature type="topological domain" description="Cytoplasmic" evidence="1">
    <location>
        <begin position="374"/>
        <end position="383"/>
    </location>
</feature>
<feature type="sequence conflict" description="In Ref. 4; AAS56210." evidence="2" ref="4">
    <original>F</original>
    <variation>S</variation>
    <location>
        <position position="129"/>
    </location>
</feature>
<gene>
    <name type="primary">PRM10</name>
    <name type="ordered locus">YJL108C</name>
    <name type="ORF">J0811</name>
</gene>
<protein>
    <recommendedName>
        <fullName>Pheromone-regulated membrane protein 10</fullName>
    </recommendedName>
</protein>
<keyword id="KW-0472">Membrane</keyword>
<keyword id="KW-1185">Reference proteome</keyword>
<keyword id="KW-0812">Transmembrane</keyword>
<keyword id="KW-1133">Transmembrane helix</keyword>
<name>PRM10_YEAST</name>
<organism>
    <name type="scientific">Saccharomyces cerevisiae (strain ATCC 204508 / S288c)</name>
    <name type="common">Baker's yeast</name>
    <dbReference type="NCBI Taxonomy" id="559292"/>
    <lineage>
        <taxon>Eukaryota</taxon>
        <taxon>Fungi</taxon>
        <taxon>Dikarya</taxon>
        <taxon>Ascomycota</taxon>
        <taxon>Saccharomycotina</taxon>
        <taxon>Saccharomycetes</taxon>
        <taxon>Saccharomycetales</taxon>
        <taxon>Saccharomycetaceae</taxon>
        <taxon>Saccharomyces</taxon>
    </lineage>
</organism>
<accession>P42946</accession>
<accession>D6VW76</accession>
<accession>E9P8R0</accession>
<accession>E9P8T9</accession>
<dbReference type="EMBL" id="X85021">
    <property type="protein sequence ID" value="CAA59386.1"/>
    <property type="molecule type" value="Genomic_DNA"/>
</dbReference>
<dbReference type="EMBL" id="Z49383">
    <property type="protein sequence ID" value="CAA89402.1"/>
    <property type="molecule type" value="Genomic_DNA"/>
</dbReference>
<dbReference type="EMBL" id="AY557884">
    <property type="protein sequence ID" value="AAS56210.1"/>
    <property type="molecule type" value="Genomic_DNA"/>
</dbReference>
<dbReference type="EMBL" id="AY227895">
    <property type="protein sequence ID" value="AAQ17204.1"/>
    <property type="molecule type" value="Genomic_DNA"/>
</dbReference>
<dbReference type="EMBL" id="BK006943">
    <property type="protein sequence ID" value="DAA08692.1"/>
    <property type="molecule type" value="Genomic_DNA"/>
</dbReference>
<dbReference type="PIR" id="S53379">
    <property type="entry name" value="S53379"/>
</dbReference>
<dbReference type="RefSeq" id="NP_012427.1">
    <property type="nucleotide sequence ID" value="NM_001181541.1"/>
</dbReference>
<dbReference type="BioGRID" id="33648">
    <property type="interactions" value="60"/>
</dbReference>
<dbReference type="DIP" id="DIP-7510N"/>
<dbReference type="FunCoup" id="P42946">
    <property type="interactions" value="67"/>
</dbReference>
<dbReference type="IntAct" id="P42946">
    <property type="interactions" value="2"/>
</dbReference>
<dbReference type="MINT" id="P42946"/>
<dbReference type="STRING" id="4932.YJL108C"/>
<dbReference type="iPTMnet" id="P42946"/>
<dbReference type="PaxDb" id="4932-YJL108C"/>
<dbReference type="PeptideAtlas" id="P42946"/>
<dbReference type="EnsemblFungi" id="YJL108C_mRNA">
    <property type="protein sequence ID" value="YJL108C"/>
    <property type="gene ID" value="YJL108C"/>
</dbReference>
<dbReference type="GeneID" id="853336"/>
<dbReference type="KEGG" id="sce:YJL108C"/>
<dbReference type="AGR" id="SGD:S000003644"/>
<dbReference type="SGD" id="S000003644">
    <property type="gene designation" value="PRM10"/>
</dbReference>
<dbReference type="VEuPathDB" id="FungiDB:YJL108C"/>
<dbReference type="eggNOG" id="ENOG502QPMM">
    <property type="taxonomic scope" value="Eukaryota"/>
</dbReference>
<dbReference type="GeneTree" id="ENSGT00940000176490"/>
<dbReference type="HOGENOM" id="CLU_007078_4_3_1"/>
<dbReference type="InParanoid" id="P42946"/>
<dbReference type="OMA" id="PMTVIMP"/>
<dbReference type="OrthoDB" id="413008at2759"/>
<dbReference type="BioCyc" id="YEAST:G3O-31562-MONOMER"/>
<dbReference type="BioGRID-ORCS" id="853336">
    <property type="hits" value="6 hits in 10 CRISPR screens"/>
</dbReference>
<dbReference type="PRO" id="PR:P42946"/>
<dbReference type="Proteomes" id="UP000002311">
    <property type="component" value="Chromosome X"/>
</dbReference>
<dbReference type="RNAct" id="P42946">
    <property type="molecule type" value="protein"/>
</dbReference>
<dbReference type="GO" id="GO:0005783">
    <property type="term" value="C:endoplasmic reticulum"/>
    <property type="evidence" value="ECO:0007005"/>
    <property type="project" value="SGD"/>
</dbReference>
<dbReference type="GO" id="GO:0016020">
    <property type="term" value="C:membrane"/>
    <property type="evidence" value="ECO:0007669"/>
    <property type="project" value="UniProtKB-SubCell"/>
</dbReference>
<dbReference type="GO" id="GO:0022857">
    <property type="term" value="F:transmembrane transporter activity"/>
    <property type="evidence" value="ECO:0007669"/>
    <property type="project" value="InterPro"/>
</dbReference>
<dbReference type="InterPro" id="IPR010619">
    <property type="entry name" value="ThrE-like_N"/>
</dbReference>
<dbReference type="InterPro" id="IPR051361">
    <property type="entry name" value="ThrE/Ser_Exporter"/>
</dbReference>
<dbReference type="InterPro" id="IPR024528">
    <property type="entry name" value="ThrE_2"/>
</dbReference>
<dbReference type="PANTHER" id="PTHR31082">
    <property type="entry name" value="PHEROMONE-REGULATED MEMBRANE PROTEIN 10"/>
    <property type="match status" value="1"/>
</dbReference>
<dbReference type="PANTHER" id="PTHR31082:SF4">
    <property type="entry name" value="PHEROMONE-REGULATED MEMBRANE PROTEIN 10"/>
    <property type="match status" value="1"/>
</dbReference>
<dbReference type="Pfam" id="PF06738">
    <property type="entry name" value="ThrE"/>
    <property type="match status" value="1"/>
</dbReference>
<dbReference type="Pfam" id="PF12821">
    <property type="entry name" value="ThrE_2"/>
    <property type="match status" value="1"/>
</dbReference>
<sequence>MIVSFGDATTRTSEVQLVRCTQGLNLWKLHQVHAVYKRVVHDTLGADEGNALLDQILADTNLYPPWMCVLLYAFCSAMVTPYAFGGDWVNLAISFFMGLCVGSLQFILSQKSYMYSNVFEISASIVVSFCGRAFGSIPRSHICFGAVTQGSLALILPGYIILCGALELQSRSLVAGAVRMFYAIIYSLFLGFGITLGSALFGWMYHNATNEISCPQLISPWFRFLFVPAFTISISLLNQAHISQLPVMVFISCTGYVVTYWAGKHFANSTEFTAALAAFVIGVLGNLYSRIWKGLAVSAMLPAIFVQVPSGIASQNSLLSGLQSANTIVNANETITTSTSDPSSSMSFGMTMIQVCVGISVGLFASSLFVYPFGKKKTGLFSL</sequence>